<organism>
    <name type="scientific">Paracoccus denitrificans (strain Pd 1222)</name>
    <dbReference type="NCBI Taxonomy" id="318586"/>
    <lineage>
        <taxon>Bacteria</taxon>
        <taxon>Pseudomonadati</taxon>
        <taxon>Pseudomonadota</taxon>
        <taxon>Alphaproteobacteria</taxon>
        <taxon>Rhodobacterales</taxon>
        <taxon>Paracoccaceae</taxon>
        <taxon>Paracoccus</taxon>
    </lineage>
</organism>
<name>ISPDF_PARDP</name>
<reference key="1">
    <citation type="submission" date="2006-12" db="EMBL/GenBank/DDBJ databases">
        <title>Complete sequence of chromosome 2 of Paracoccus denitrificans PD1222.</title>
        <authorList>
            <person name="Copeland A."/>
            <person name="Lucas S."/>
            <person name="Lapidus A."/>
            <person name="Barry K."/>
            <person name="Detter J.C."/>
            <person name="Glavina del Rio T."/>
            <person name="Hammon N."/>
            <person name="Israni S."/>
            <person name="Dalin E."/>
            <person name="Tice H."/>
            <person name="Pitluck S."/>
            <person name="Munk A.C."/>
            <person name="Brettin T."/>
            <person name="Bruce D."/>
            <person name="Han C."/>
            <person name="Tapia R."/>
            <person name="Gilna P."/>
            <person name="Schmutz J."/>
            <person name="Larimer F."/>
            <person name="Land M."/>
            <person name="Hauser L."/>
            <person name="Kyrpides N."/>
            <person name="Lykidis A."/>
            <person name="Spiro S."/>
            <person name="Richardson D.J."/>
            <person name="Moir J.W.B."/>
            <person name="Ferguson S.J."/>
            <person name="van Spanning R.J.M."/>
            <person name="Richardson P."/>
        </authorList>
    </citation>
    <scope>NUCLEOTIDE SEQUENCE [LARGE SCALE GENOMIC DNA]</scope>
    <source>
        <strain>Pd 1222</strain>
    </source>
</reference>
<gene>
    <name evidence="1" type="primary">ispDF</name>
    <name type="ordered locus">Pden_3667</name>
</gene>
<sequence length="380" mass="39647">MTIPATYAAIITAAGRGTRAGDGPPKQWRPLAGQSVLERSIAAFAGFPRVVVTLAPEDMARGVAELSGPVVLVAGGATRSDSVRAALESLEGSGVTHVLIHDGARPLVSRRVIGGVIEALQSGAPAAAPALPVTDALWRAQDGCVTATASREGLFRAQTPQGFALDAILAAHRAHPEGAADDVELAIRAGLPVTVTPGDEDNLKLTWPGDFARAERILGDAMDIRLGNGFDVHAFTTGDHVWLCGVKIPHDKALLGHSDADVGMHALTDAIYGALAQGDIGRHFPPSDPQWKGAESHIFLRHAAMLARQMGYEISNADVTLICERPKVGPHAGAMALRLSEIIGVEPDRVSVKATTSERLGFTGREEGIASIATATLVKG</sequence>
<comment type="function">
    <text evidence="1">Bifunctional enzyme that catalyzes the formation of 4-diphosphocytidyl-2-C-methyl-D-erythritol from CTP and 2-C-methyl-D-erythritol 4-phosphate (MEP) (IspD), and catalyzes the conversion of 4-diphosphocytidyl-2-C-methyl-D-erythritol 2-phosphate (CDP-ME2P) to 2-C-methyl-D-erythritol 2,4-cyclodiphosphate (ME-CPP) with a corresponding release of cytidine 5-monophosphate (CMP) (IspF).</text>
</comment>
<comment type="catalytic activity">
    <reaction evidence="1">
        <text>2-C-methyl-D-erythritol 4-phosphate + CTP + H(+) = 4-CDP-2-C-methyl-D-erythritol + diphosphate</text>
        <dbReference type="Rhea" id="RHEA:13429"/>
        <dbReference type="ChEBI" id="CHEBI:15378"/>
        <dbReference type="ChEBI" id="CHEBI:33019"/>
        <dbReference type="ChEBI" id="CHEBI:37563"/>
        <dbReference type="ChEBI" id="CHEBI:57823"/>
        <dbReference type="ChEBI" id="CHEBI:58262"/>
        <dbReference type="EC" id="2.7.7.60"/>
    </reaction>
</comment>
<comment type="catalytic activity">
    <reaction evidence="1">
        <text>4-CDP-2-C-methyl-D-erythritol 2-phosphate = 2-C-methyl-D-erythritol 2,4-cyclic diphosphate + CMP</text>
        <dbReference type="Rhea" id="RHEA:23864"/>
        <dbReference type="ChEBI" id="CHEBI:57919"/>
        <dbReference type="ChEBI" id="CHEBI:58483"/>
        <dbReference type="ChEBI" id="CHEBI:60377"/>
        <dbReference type="EC" id="4.6.1.12"/>
    </reaction>
</comment>
<comment type="cofactor">
    <cofactor evidence="1">
        <name>a divalent metal cation</name>
        <dbReference type="ChEBI" id="CHEBI:60240"/>
    </cofactor>
</comment>
<comment type="pathway">
    <text evidence="1">Isoprenoid biosynthesis; isopentenyl diphosphate biosynthesis via DXP pathway; isopentenyl diphosphate from 1-deoxy-D-xylulose 5-phosphate: step 2/6.</text>
</comment>
<comment type="pathway">
    <text evidence="1">Isoprenoid biosynthesis; isopentenyl diphosphate biosynthesis via DXP pathway; isopentenyl diphosphate from 1-deoxy-D-xylulose 5-phosphate: step 4/6.</text>
</comment>
<comment type="similarity">
    <text evidence="1">In the N-terminal section; belongs to the IspD/TarI cytidylyltransferase family. IspD subfamily.</text>
</comment>
<comment type="similarity">
    <text evidence="1">In the C-terminal section; belongs to the IspF family.</text>
</comment>
<comment type="sequence caution" evidence="2">
    <conflict type="erroneous initiation">
        <sequence resource="EMBL-CDS" id="ABL71734"/>
    </conflict>
    <text>Truncated N-terminus.</text>
</comment>
<evidence type="ECO:0000255" key="1">
    <source>
        <dbReference type="HAMAP-Rule" id="MF_01520"/>
    </source>
</evidence>
<evidence type="ECO:0000305" key="2"/>
<feature type="chain" id="PRO_0000292858" description="Bifunctional enzyme IspD/IspF">
    <location>
        <begin position="1"/>
        <end position="380"/>
    </location>
</feature>
<feature type="region of interest" description="2-C-methyl-D-erythritol 4-phosphate cytidylyltransferase" evidence="1">
    <location>
        <begin position="1"/>
        <end position="224"/>
    </location>
</feature>
<feature type="region of interest" description="2-C-methyl-D-erythritol 2,4-cyclodiphosphate synthase" evidence="1">
    <location>
        <begin position="225"/>
        <end position="380"/>
    </location>
</feature>
<feature type="binding site" evidence="1">
    <location>
        <begin position="231"/>
        <end position="233"/>
    </location>
    <ligand>
        <name>4-CDP-2-C-methyl-D-erythritol 2-phosphate</name>
        <dbReference type="ChEBI" id="CHEBI:57919"/>
    </ligand>
</feature>
<feature type="binding site" evidence="1">
    <location>
        <position position="231"/>
    </location>
    <ligand>
        <name>a divalent metal cation</name>
        <dbReference type="ChEBI" id="CHEBI:60240"/>
    </ligand>
</feature>
<feature type="binding site" evidence="1">
    <location>
        <position position="233"/>
    </location>
    <ligand>
        <name>a divalent metal cation</name>
        <dbReference type="ChEBI" id="CHEBI:60240"/>
    </ligand>
</feature>
<feature type="binding site" evidence="1">
    <location>
        <begin position="257"/>
        <end position="258"/>
    </location>
    <ligand>
        <name>4-CDP-2-C-methyl-D-erythritol 2-phosphate</name>
        <dbReference type="ChEBI" id="CHEBI:57919"/>
    </ligand>
</feature>
<feature type="binding site" evidence="1">
    <location>
        <position position="265"/>
    </location>
    <ligand>
        <name>a divalent metal cation</name>
        <dbReference type="ChEBI" id="CHEBI:60240"/>
    </ligand>
</feature>
<feature type="binding site" evidence="1">
    <location>
        <begin position="279"/>
        <end position="281"/>
    </location>
    <ligand>
        <name>4-CDP-2-C-methyl-D-erythritol 2-phosphate</name>
        <dbReference type="ChEBI" id="CHEBI:57919"/>
    </ligand>
</feature>
<feature type="binding site" evidence="1">
    <location>
        <begin position="355"/>
        <end position="358"/>
    </location>
    <ligand>
        <name>4-CDP-2-C-methyl-D-erythritol 2-phosphate</name>
        <dbReference type="ChEBI" id="CHEBI:57919"/>
    </ligand>
</feature>
<feature type="binding site" evidence="1">
    <location>
        <position position="362"/>
    </location>
    <ligand>
        <name>4-CDP-2-C-methyl-D-erythritol 2-phosphate</name>
        <dbReference type="ChEBI" id="CHEBI:57919"/>
    </ligand>
</feature>
<feature type="binding site" evidence="1">
    <location>
        <position position="365"/>
    </location>
    <ligand>
        <name>4-CDP-2-C-methyl-D-erythritol 2-phosphate</name>
        <dbReference type="ChEBI" id="CHEBI:57919"/>
    </ligand>
</feature>
<feature type="site" description="Transition state stabilizer" evidence="1">
    <location>
        <position position="19"/>
    </location>
</feature>
<feature type="site" description="Transition state stabilizer" evidence="1">
    <location>
        <position position="26"/>
    </location>
</feature>
<feature type="site" description="Positions MEP for the nucleophilic attack" evidence="1">
    <location>
        <position position="151"/>
    </location>
</feature>
<feature type="site" description="Positions MEP for the nucleophilic attack" evidence="1">
    <location>
        <position position="204"/>
    </location>
</feature>
<feature type="site" description="Transition state stabilizer" evidence="1">
    <location>
        <position position="257"/>
    </location>
</feature>
<feature type="site" description="Transition state stabilizer" evidence="1">
    <location>
        <position position="356"/>
    </location>
</feature>
<protein>
    <recommendedName>
        <fullName evidence="1">Bifunctional enzyme IspD/IspF</fullName>
    </recommendedName>
    <domain>
        <recommendedName>
            <fullName evidence="1">2-C-methyl-D-erythritol 4-phosphate cytidylyltransferase</fullName>
            <ecNumber evidence="1">2.7.7.60</ecNumber>
        </recommendedName>
        <alternativeName>
            <fullName evidence="1">4-diphosphocytidyl-2C-methyl-D-erythritol synthase</fullName>
        </alternativeName>
        <alternativeName>
            <fullName evidence="1">MEP cytidylyltransferase</fullName>
            <shortName evidence="1">MCT</shortName>
        </alternativeName>
    </domain>
    <domain>
        <recommendedName>
            <fullName evidence="1">2-C-methyl-D-erythritol 2,4-cyclodiphosphate synthase</fullName>
            <shortName evidence="1">MECDP-synthase</shortName>
            <shortName evidence="1">MECPP-synthase</shortName>
            <shortName evidence="1">MECPS</shortName>
            <ecNumber evidence="1">4.6.1.12</ecNumber>
        </recommendedName>
    </domain>
</protein>
<dbReference type="EC" id="2.7.7.60" evidence="1"/>
<dbReference type="EC" id="4.6.1.12" evidence="1"/>
<dbReference type="EMBL" id="CP000490">
    <property type="protein sequence ID" value="ABL71734.1"/>
    <property type="status" value="ALT_INIT"/>
    <property type="molecule type" value="Genomic_DNA"/>
</dbReference>
<dbReference type="RefSeq" id="WP_041530600.1">
    <property type="nucleotide sequence ID" value="NC_008687.1"/>
</dbReference>
<dbReference type="SMR" id="A1B890"/>
<dbReference type="STRING" id="318586.Pden_3667"/>
<dbReference type="EnsemblBacteria" id="ABL71734">
    <property type="protein sequence ID" value="ABL71734"/>
    <property type="gene ID" value="Pden_3667"/>
</dbReference>
<dbReference type="GeneID" id="93453323"/>
<dbReference type="KEGG" id="pde:Pden_3667"/>
<dbReference type="eggNOG" id="COG0245">
    <property type="taxonomic scope" value="Bacteria"/>
</dbReference>
<dbReference type="eggNOG" id="COG1211">
    <property type="taxonomic scope" value="Bacteria"/>
</dbReference>
<dbReference type="HOGENOM" id="CLU_042800_0_0_5"/>
<dbReference type="OrthoDB" id="9804336at2"/>
<dbReference type="UniPathway" id="UPA00056">
    <property type="reaction ID" value="UER00093"/>
</dbReference>
<dbReference type="UniPathway" id="UPA00056">
    <property type="reaction ID" value="UER00095"/>
</dbReference>
<dbReference type="Proteomes" id="UP000000361">
    <property type="component" value="Chromosome 2"/>
</dbReference>
<dbReference type="GO" id="GO:0008685">
    <property type="term" value="F:2-C-methyl-D-erythritol 2,4-cyclodiphosphate synthase activity"/>
    <property type="evidence" value="ECO:0007669"/>
    <property type="project" value="UniProtKB-UniRule"/>
</dbReference>
<dbReference type="GO" id="GO:0050518">
    <property type="term" value="F:2-C-methyl-D-erythritol 4-phosphate cytidylyltransferase activity"/>
    <property type="evidence" value="ECO:0007669"/>
    <property type="project" value="UniProtKB-UniRule"/>
</dbReference>
<dbReference type="GO" id="GO:0046872">
    <property type="term" value="F:metal ion binding"/>
    <property type="evidence" value="ECO:0007669"/>
    <property type="project" value="UniProtKB-KW"/>
</dbReference>
<dbReference type="GO" id="GO:0019288">
    <property type="term" value="P:isopentenyl diphosphate biosynthetic process, methylerythritol 4-phosphate pathway"/>
    <property type="evidence" value="ECO:0007669"/>
    <property type="project" value="UniProtKB-UniRule"/>
</dbReference>
<dbReference type="GO" id="GO:0016114">
    <property type="term" value="P:terpenoid biosynthetic process"/>
    <property type="evidence" value="ECO:0007669"/>
    <property type="project" value="InterPro"/>
</dbReference>
<dbReference type="CDD" id="cd02516">
    <property type="entry name" value="CDP-ME_synthetase"/>
    <property type="match status" value="1"/>
</dbReference>
<dbReference type="CDD" id="cd00554">
    <property type="entry name" value="MECDP_synthase"/>
    <property type="match status" value="1"/>
</dbReference>
<dbReference type="FunFam" id="3.30.1330.50:FF:000003">
    <property type="entry name" value="2-C-methyl-D-erythritol 2,4-cyclodiphosphate synthase"/>
    <property type="match status" value="1"/>
</dbReference>
<dbReference type="Gene3D" id="3.30.1330.50">
    <property type="entry name" value="2-C-methyl-D-erythritol 2,4-cyclodiphosphate synthase"/>
    <property type="match status" value="1"/>
</dbReference>
<dbReference type="Gene3D" id="3.90.550.10">
    <property type="entry name" value="Spore Coat Polysaccharide Biosynthesis Protein SpsA, Chain A"/>
    <property type="match status" value="1"/>
</dbReference>
<dbReference type="HAMAP" id="MF_00108">
    <property type="entry name" value="IspD"/>
    <property type="match status" value="1"/>
</dbReference>
<dbReference type="HAMAP" id="MF_01520">
    <property type="entry name" value="IspDF"/>
    <property type="match status" value="1"/>
</dbReference>
<dbReference type="HAMAP" id="MF_00107">
    <property type="entry name" value="IspF"/>
    <property type="match status" value="1"/>
</dbReference>
<dbReference type="InterPro" id="IPR001228">
    <property type="entry name" value="IspD"/>
</dbReference>
<dbReference type="InterPro" id="IPR026596">
    <property type="entry name" value="IspD/F"/>
</dbReference>
<dbReference type="InterPro" id="IPR034683">
    <property type="entry name" value="IspD/TarI"/>
</dbReference>
<dbReference type="InterPro" id="IPR018294">
    <property type="entry name" value="ISPD_synthase_CS"/>
</dbReference>
<dbReference type="InterPro" id="IPR003526">
    <property type="entry name" value="MECDP_synthase"/>
</dbReference>
<dbReference type="InterPro" id="IPR020555">
    <property type="entry name" value="MECDP_synthase_CS"/>
</dbReference>
<dbReference type="InterPro" id="IPR036571">
    <property type="entry name" value="MECDP_synthase_sf"/>
</dbReference>
<dbReference type="InterPro" id="IPR029044">
    <property type="entry name" value="Nucleotide-diphossugar_trans"/>
</dbReference>
<dbReference type="NCBIfam" id="TIGR00453">
    <property type="entry name" value="ispD"/>
    <property type="match status" value="1"/>
</dbReference>
<dbReference type="NCBIfam" id="TIGR00151">
    <property type="entry name" value="ispF"/>
    <property type="match status" value="1"/>
</dbReference>
<dbReference type="NCBIfam" id="NF006899">
    <property type="entry name" value="PRK09382.1"/>
    <property type="match status" value="1"/>
</dbReference>
<dbReference type="PANTHER" id="PTHR43181">
    <property type="entry name" value="2-C-METHYL-D-ERYTHRITOL 2,4-CYCLODIPHOSPHATE SYNTHASE, CHLOROPLASTIC"/>
    <property type="match status" value="1"/>
</dbReference>
<dbReference type="PANTHER" id="PTHR43181:SF1">
    <property type="entry name" value="2-C-METHYL-D-ERYTHRITOL 2,4-CYCLODIPHOSPHATE SYNTHASE, CHLOROPLASTIC"/>
    <property type="match status" value="1"/>
</dbReference>
<dbReference type="Pfam" id="PF01128">
    <property type="entry name" value="IspD"/>
    <property type="match status" value="1"/>
</dbReference>
<dbReference type="Pfam" id="PF02542">
    <property type="entry name" value="YgbB"/>
    <property type="match status" value="1"/>
</dbReference>
<dbReference type="SUPFAM" id="SSF69765">
    <property type="entry name" value="IpsF-like"/>
    <property type="match status" value="1"/>
</dbReference>
<dbReference type="SUPFAM" id="SSF53448">
    <property type="entry name" value="Nucleotide-diphospho-sugar transferases"/>
    <property type="match status" value="1"/>
</dbReference>
<dbReference type="PROSITE" id="PS01295">
    <property type="entry name" value="ISPD"/>
    <property type="match status" value="1"/>
</dbReference>
<dbReference type="PROSITE" id="PS01350">
    <property type="entry name" value="ISPF"/>
    <property type="match status" value="1"/>
</dbReference>
<proteinExistence type="inferred from homology"/>
<keyword id="KW-0414">Isoprene biosynthesis</keyword>
<keyword id="KW-0456">Lyase</keyword>
<keyword id="KW-0479">Metal-binding</keyword>
<keyword id="KW-0511">Multifunctional enzyme</keyword>
<keyword id="KW-0548">Nucleotidyltransferase</keyword>
<keyword id="KW-1185">Reference proteome</keyword>
<keyword id="KW-0808">Transferase</keyword>
<accession>A1B890</accession>